<sequence length="332" mass="36761">MKVTFEELKGAFYRVLRSRNIAEDTADECAEMFARTTESGVYSHGVNRFPRFIQQLDNGDIIPDAKPQRVTSLGAIEQWDAQRAIGNLTAKKMMDRAIELASDHGIGLVALRNANHWMRGGSYGWQAAEKGYIGICWTNSIAVMPPWGAKECRIGTNPLIVAIPSTPITMVDMSMSMFSYGMLEVNRLAGRELSVDGGFDDNGQLTKEPGVIEKNRRILPMGYWKGSGLSIVLDMIATLLSNGSSVAEVTQENSDEYGVSQIFIAIEVDKLIDGATRDAKLQRIMDFITTAERADDNVAIRLPGHEFTKLLDDNRRHGITIDDSVWAKIQAL</sequence>
<gene>
    <name evidence="1" type="primary">dlgD</name>
    <name type="ordered locus">SPC_3748</name>
</gene>
<organism>
    <name type="scientific">Salmonella paratyphi C (strain RKS4594)</name>
    <dbReference type="NCBI Taxonomy" id="476213"/>
    <lineage>
        <taxon>Bacteria</taxon>
        <taxon>Pseudomonadati</taxon>
        <taxon>Pseudomonadota</taxon>
        <taxon>Gammaproteobacteria</taxon>
        <taxon>Enterobacterales</taxon>
        <taxon>Enterobacteriaceae</taxon>
        <taxon>Salmonella</taxon>
    </lineage>
</organism>
<feature type="chain" id="PRO_1000148691" description="2,3-diketo-L-gulonate reductase">
    <location>
        <begin position="1"/>
        <end position="332"/>
    </location>
</feature>
<feature type="active site" description="Proton donor" evidence="1">
    <location>
        <position position="44"/>
    </location>
</feature>
<feature type="binding site" evidence="1">
    <location>
        <begin position="168"/>
        <end position="174"/>
    </location>
    <ligand>
        <name>NAD(+)</name>
        <dbReference type="ChEBI" id="CHEBI:57540"/>
    </ligand>
</feature>
<feature type="binding site" evidence="1">
    <location>
        <begin position="224"/>
        <end position="225"/>
    </location>
    <ligand>
        <name>NAD(+)</name>
        <dbReference type="ChEBI" id="CHEBI:57540"/>
    </ligand>
</feature>
<feature type="binding site" evidence="1">
    <location>
        <begin position="304"/>
        <end position="306"/>
    </location>
    <ligand>
        <name>NAD(+)</name>
        <dbReference type="ChEBI" id="CHEBI:57540"/>
    </ligand>
</feature>
<name>DLGD_SALPC</name>
<comment type="function">
    <text evidence="1">Catalyzes the reduction of 2,3-diketo-L-gulonate in the presence of NADH, to form 3-keto-L-gulonate.</text>
</comment>
<comment type="catalytic activity">
    <reaction evidence="1">
        <text>3-dehydro-L-gulonate + NAD(+) = 2,3-dioxo-L-gulonate + NADH + H(+)</text>
        <dbReference type="Rhea" id="RHEA:21924"/>
        <dbReference type="ChEBI" id="CHEBI:15378"/>
        <dbReference type="ChEBI" id="CHEBI:57441"/>
        <dbReference type="ChEBI" id="CHEBI:57540"/>
        <dbReference type="ChEBI" id="CHEBI:57655"/>
        <dbReference type="ChEBI" id="CHEBI:57945"/>
        <dbReference type="EC" id="1.1.1.130"/>
    </reaction>
</comment>
<comment type="catalytic activity">
    <reaction evidence="1">
        <text>3-dehydro-L-gulonate + NADP(+) = 2,3-dioxo-L-gulonate + NADPH + H(+)</text>
        <dbReference type="Rhea" id="RHEA:21928"/>
        <dbReference type="ChEBI" id="CHEBI:15378"/>
        <dbReference type="ChEBI" id="CHEBI:57441"/>
        <dbReference type="ChEBI" id="CHEBI:57655"/>
        <dbReference type="ChEBI" id="CHEBI:57783"/>
        <dbReference type="ChEBI" id="CHEBI:58349"/>
        <dbReference type="EC" id="1.1.1.130"/>
    </reaction>
</comment>
<comment type="subunit">
    <text evidence="1">Homodimer.</text>
</comment>
<comment type="subcellular location">
    <subcellularLocation>
        <location evidence="1">Cytoplasm</location>
    </subcellularLocation>
</comment>
<comment type="similarity">
    <text evidence="1">Belongs to the LDH2/MDH2 oxidoreductase family. DlgD subfamily.</text>
</comment>
<keyword id="KW-0963">Cytoplasm</keyword>
<keyword id="KW-0520">NAD</keyword>
<keyword id="KW-0560">Oxidoreductase</keyword>
<protein>
    <recommendedName>
        <fullName evidence="1">2,3-diketo-L-gulonate reductase</fullName>
        <shortName evidence="1">2,3-DKG reductase</shortName>
        <ecNumber evidence="1">1.1.1.130</ecNumber>
    </recommendedName>
    <alternativeName>
        <fullName evidence="1">3-dehydro-L-gulonate 2-dehydrogenase</fullName>
    </alternativeName>
</protein>
<reference key="1">
    <citation type="journal article" date="2009" name="PLoS ONE">
        <title>Salmonella paratyphi C: genetic divergence from Salmonella choleraesuis and pathogenic convergence with Salmonella typhi.</title>
        <authorList>
            <person name="Liu W.-Q."/>
            <person name="Feng Y."/>
            <person name="Wang Y."/>
            <person name="Zou Q.-H."/>
            <person name="Chen F."/>
            <person name="Guo J.-T."/>
            <person name="Peng Y.-H."/>
            <person name="Jin Y."/>
            <person name="Li Y.-G."/>
            <person name="Hu S.-N."/>
            <person name="Johnston R.N."/>
            <person name="Liu G.-R."/>
            <person name="Liu S.-L."/>
        </authorList>
    </citation>
    <scope>NUCLEOTIDE SEQUENCE [LARGE SCALE GENOMIC DNA]</scope>
    <source>
        <strain>RKS4594</strain>
    </source>
</reference>
<accession>C0Q1C9</accession>
<dbReference type="EC" id="1.1.1.130" evidence="1"/>
<dbReference type="EMBL" id="CP000857">
    <property type="protein sequence ID" value="ACN47825.1"/>
    <property type="molecule type" value="Genomic_DNA"/>
</dbReference>
<dbReference type="SMR" id="C0Q1C9"/>
<dbReference type="KEGG" id="sei:SPC_3748"/>
<dbReference type="HOGENOM" id="CLU_040452_4_0_6"/>
<dbReference type="Proteomes" id="UP000001599">
    <property type="component" value="Chromosome"/>
</dbReference>
<dbReference type="GO" id="GO:0005737">
    <property type="term" value="C:cytoplasm"/>
    <property type="evidence" value="ECO:0007669"/>
    <property type="project" value="UniProtKB-SubCell"/>
</dbReference>
<dbReference type="GO" id="GO:0047559">
    <property type="term" value="F:3-dehydro-L-gulonate 2-dehydrogenase activity"/>
    <property type="evidence" value="ECO:0007669"/>
    <property type="project" value="UniProtKB-UniRule"/>
</dbReference>
<dbReference type="GO" id="GO:0070403">
    <property type="term" value="F:NAD+ binding"/>
    <property type="evidence" value="ECO:0007669"/>
    <property type="project" value="InterPro"/>
</dbReference>
<dbReference type="Gene3D" id="1.10.1530.10">
    <property type="match status" value="1"/>
</dbReference>
<dbReference type="Gene3D" id="3.30.1370.60">
    <property type="entry name" value="Hypothetical oxidoreductase yiak, domain 2"/>
    <property type="match status" value="1"/>
</dbReference>
<dbReference type="Gene3D" id="3.30.60.50">
    <property type="entry name" value="Hypothetical oxidoreductase yiak, domain 3"/>
    <property type="match status" value="1"/>
</dbReference>
<dbReference type="HAMAP" id="MF_00820">
    <property type="entry name" value="Diketo_gul_reduc"/>
    <property type="match status" value="1"/>
</dbReference>
<dbReference type="InterPro" id="IPR023689">
    <property type="entry name" value="Diketo_gul_Rdtase"/>
</dbReference>
<dbReference type="InterPro" id="IPR043144">
    <property type="entry name" value="Mal/L-sulf/L-lact_DH-like_ah"/>
</dbReference>
<dbReference type="InterPro" id="IPR043143">
    <property type="entry name" value="Mal/L-sulf/L-lact_DH-like_NADP"/>
</dbReference>
<dbReference type="InterPro" id="IPR036111">
    <property type="entry name" value="Mal/L-sulfo/L-lacto_DH-like_sf"/>
</dbReference>
<dbReference type="InterPro" id="IPR003767">
    <property type="entry name" value="Malate/L-lactate_DH-like"/>
</dbReference>
<dbReference type="NCBIfam" id="NF009750">
    <property type="entry name" value="PRK13260.1"/>
    <property type="match status" value="1"/>
</dbReference>
<dbReference type="PANTHER" id="PTHR11091:SF3">
    <property type="entry name" value="2,3-DIKETO-L-GULONATE REDUCTASE"/>
    <property type="match status" value="1"/>
</dbReference>
<dbReference type="PANTHER" id="PTHR11091">
    <property type="entry name" value="OXIDOREDUCTASE-RELATED"/>
    <property type="match status" value="1"/>
</dbReference>
<dbReference type="Pfam" id="PF02615">
    <property type="entry name" value="Ldh_2"/>
    <property type="match status" value="1"/>
</dbReference>
<dbReference type="SUPFAM" id="SSF89733">
    <property type="entry name" value="L-sulfolactate dehydrogenase-like"/>
    <property type="match status" value="1"/>
</dbReference>
<proteinExistence type="inferred from homology"/>
<evidence type="ECO:0000255" key="1">
    <source>
        <dbReference type="HAMAP-Rule" id="MF_00820"/>
    </source>
</evidence>